<feature type="chain" id="PRO_1000126367" description="Probable transaldolase">
    <location>
        <begin position="1"/>
        <end position="216"/>
    </location>
</feature>
<feature type="active site" description="Schiff-base intermediate with substrate" evidence="1">
    <location>
        <position position="83"/>
    </location>
</feature>
<comment type="function">
    <text evidence="1">Transaldolase is important for the balance of metabolites in the pentose-phosphate pathway.</text>
</comment>
<comment type="catalytic activity">
    <reaction evidence="1">
        <text>D-sedoheptulose 7-phosphate + D-glyceraldehyde 3-phosphate = D-erythrose 4-phosphate + beta-D-fructose 6-phosphate</text>
        <dbReference type="Rhea" id="RHEA:17053"/>
        <dbReference type="ChEBI" id="CHEBI:16897"/>
        <dbReference type="ChEBI" id="CHEBI:57483"/>
        <dbReference type="ChEBI" id="CHEBI:57634"/>
        <dbReference type="ChEBI" id="CHEBI:59776"/>
        <dbReference type="EC" id="2.2.1.2"/>
    </reaction>
</comment>
<comment type="pathway">
    <text evidence="1">Carbohydrate degradation; pentose phosphate pathway; D-glyceraldehyde 3-phosphate and beta-D-fructose 6-phosphate from D-ribose 5-phosphate and D-xylulose 5-phosphate (non-oxidative stage): step 2/3.</text>
</comment>
<comment type="subcellular location">
    <subcellularLocation>
        <location evidence="1">Cytoplasm</location>
    </subcellularLocation>
</comment>
<comment type="similarity">
    <text evidence="1">Belongs to the transaldolase family. Type 3B subfamily.</text>
</comment>
<reference key="1">
    <citation type="submission" date="2008-01" db="EMBL/GenBank/DDBJ databases">
        <title>Complete sequence of Thermoanaerobacter sp. X514.</title>
        <authorList>
            <consortium name="US DOE Joint Genome Institute"/>
            <person name="Copeland A."/>
            <person name="Lucas S."/>
            <person name="Lapidus A."/>
            <person name="Barry K."/>
            <person name="Glavina del Rio T."/>
            <person name="Dalin E."/>
            <person name="Tice H."/>
            <person name="Pitluck S."/>
            <person name="Bruce D."/>
            <person name="Goodwin L."/>
            <person name="Saunders E."/>
            <person name="Brettin T."/>
            <person name="Detter J.C."/>
            <person name="Han C."/>
            <person name="Schmutz J."/>
            <person name="Larimer F."/>
            <person name="Land M."/>
            <person name="Hauser L."/>
            <person name="Kyrpides N."/>
            <person name="Kim E."/>
            <person name="Hemme C."/>
            <person name="Fields M.W."/>
            <person name="He Z."/>
            <person name="Zhou J."/>
            <person name="Richardson P."/>
        </authorList>
    </citation>
    <scope>NUCLEOTIDE SEQUENCE [LARGE SCALE GENOMIC DNA]</scope>
    <source>
        <strain>X514</strain>
    </source>
</reference>
<dbReference type="EC" id="2.2.1.2" evidence="1"/>
<dbReference type="EMBL" id="CP000923">
    <property type="protein sequence ID" value="ABY92408.1"/>
    <property type="molecule type" value="Genomic_DNA"/>
</dbReference>
<dbReference type="SMR" id="B0K6D2"/>
<dbReference type="KEGG" id="tex:Teth514_1110"/>
<dbReference type="HOGENOM" id="CLU_079764_0_0_9"/>
<dbReference type="UniPathway" id="UPA00115">
    <property type="reaction ID" value="UER00414"/>
</dbReference>
<dbReference type="Proteomes" id="UP000002155">
    <property type="component" value="Chromosome"/>
</dbReference>
<dbReference type="GO" id="GO:0005737">
    <property type="term" value="C:cytoplasm"/>
    <property type="evidence" value="ECO:0007669"/>
    <property type="project" value="UniProtKB-SubCell"/>
</dbReference>
<dbReference type="GO" id="GO:0016832">
    <property type="term" value="F:aldehyde-lyase activity"/>
    <property type="evidence" value="ECO:0007669"/>
    <property type="project" value="InterPro"/>
</dbReference>
<dbReference type="GO" id="GO:0004801">
    <property type="term" value="F:transaldolase activity"/>
    <property type="evidence" value="ECO:0007669"/>
    <property type="project" value="UniProtKB-UniRule"/>
</dbReference>
<dbReference type="GO" id="GO:0005975">
    <property type="term" value="P:carbohydrate metabolic process"/>
    <property type="evidence" value="ECO:0007669"/>
    <property type="project" value="InterPro"/>
</dbReference>
<dbReference type="GO" id="GO:0006098">
    <property type="term" value="P:pentose-phosphate shunt"/>
    <property type="evidence" value="ECO:0007669"/>
    <property type="project" value="UniProtKB-UniRule"/>
</dbReference>
<dbReference type="CDD" id="cd00956">
    <property type="entry name" value="Transaldolase_FSA"/>
    <property type="match status" value="1"/>
</dbReference>
<dbReference type="FunFam" id="3.20.20.70:FF:000018">
    <property type="entry name" value="Probable transaldolase"/>
    <property type="match status" value="1"/>
</dbReference>
<dbReference type="Gene3D" id="3.20.20.70">
    <property type="entry name" value="Aldolase class I"/>
    <property type="match status" value="1"/>
</dbReference>
<dbReference type="HAMAP" id="MF_00494">
    <property type="entry name" value="Transaldolase_3b"/>
    <property type="match status" value="1"/>
</dbReference>
<dbReference type="InterPro" id="IPR013785">
    <property type="entry name" value="Aldolase_TIM"/>
</dbReference>
<dbReference type="InterPro" id="IPR001585">
    <property type="entry name" value="TAL/FSA"/>
</dbReference>
<dbReference type="InterPro" id="IPR022999">
    <property type="entry name" value="Transaldolase_3B"/>
</dbReference>
<dbReference type="InterPro" id="IPR004731">
    <property type="entry name" value="Transaldolase_3B/F6P_aldolase"/>
</dbReference>
<dbReference type="InterPro" id="IPR018225">
    <property type="entry name" value="Transaldolase_AS"/>
</dbReference>
<dbReference type="InterPro" id="IPR033919">
    <property type="entry name" value="TSA/FSA_arc/bac"/>
</dbReference>
<dbReference type="NCBIfam" id="TIGR00875">
    <property type="entry name" value="fsa_talC_mipB"/>
    <property type="match status" value="1"/>
</dbReference>
<dbReference type="PANTHER" id="PTHR10683">
    <property type="entry name" value="TRANSALDOLASE"/>
    <property type="match status" value="1"/>
</dbReference>
<dbReference type="PANTHER" id="PTHR10683:SF36">
    <property type="entry name" value="TRANSALDOLASE"/>
    <property type="match status" value="1"/>
</dbReference>
<dbReference type="Pfam" id="PF00923">
    <property type="entry name" value="TAL_FSA"/>
    <property type="match status" value="1"/>
</dbReference>
<dbReference type="SUPFAM" id="SSF51569">
    <property type="entry name" value="Aldolase"/>
    <property type="match status" value="1"/>
</dbReference>
<dbReference type="PROSITE" id="PS01054">
    <property type="entry name" value="TRANSALDOLASE_1"/>
    <property type="match status" value="1"/>
</dbReference>
<organism>
    <name type="scientific">Thermoanaerobacter sp. (strain X514)</name>
    <dbReference type="NCBI Taxonomy" id="399726"/>
    <lineage>
        <taxon>Bacteria</taxon>
        <taxon>Bacillati</taxon>
        <taxon>Bacillota</taxon>
        <taxon>Clostridia</taxon>
        <taxon>Thermoanaerobacterales</taxon>
        <taxon>Thermoanaerobacteraceae</taxon>
        <taxon>Thermoanaerobacter</taxon>
    </lineage>
</organism>
<protein>
    <recommendedName>
        <fullName evidence="1">Probable transaldolase</fullName>
        <ecNumber evidence="1">2.2.1.2</ecNumber>
    </recommendedName>
</protein>
<keyword id="KW-0963">Cytoplasm</keyword>
<keyword id="KW-0570">Pentose shunt</keyword>
<keyword id="KW-0704">Schiff base</keyword>
<keyword id="KW-0808">Transferase</keyword>
<name>TAL_THEPX</name>
<sequence>MKFFLDTANVDEIREANALGVISGVTTNPSLIAKEGRDFIEVVKEITQIVDGPISAEVISDDSEGMIREARELAKIHKNIVIKIPMTAEGLKAVNVLSKEGIKTNVTLIFTANQALLAARAGATYVSPFVGRLDDINTDGLQIIEDIVTIFNNYDIDTEIITASVRHPIHVLQAAKLGAHIATVPYKVLMQMVKHPLTDAGIERFKEDWRKAGLKI</sequence>
<accession>B0K6D2</accession>
<proteinExistence type="inferred from homology"/>
<evidence type="ECO:0000255" key="1">
    <source>
        <dbReference type="HAMAP-Rule" id="MF_00494"/>
    </source>
</evidence>
<gene>
    <name evidence="1" type="primary">tal</name>
    <name type="ordered locus">Teth514_1110</name>
</gene>